<keyword id="KW-1185">Reference proteome</keyword>
<keyword id="KW-0687">Ribonucleoprotein</keyword>
<keyword id="KW-0689">Ribosomal protein</keyword>
<keyword id="KW-0694">RNA-binding</keyword>
<keyword id="KW-0699">rRNA-binding</keyword>
<reference key="1">
    <citation type="journal article" date="2007" name="ISME J.">
        <title>Population level functional diversity in a microbial community revealed by comparative genomic and metagenomic analyses.</title>
        <authorList>
            <person name="Bhaya D."/>
            <person name="Grossman A.R."/>
            <person name="Steunou A.-S."/>
            <person name="Khuri N."/>
            <person name="Cohan F.M."/>
            <person name="Hamamura N."/>
            <person name="Melendrez M.C."/>
            <person name="Bateson M.M."/>
            <person name="Ward D.M."/>
            <person name="Heidelberg J.F."/>
        </authorList>
    </citation>
    <scope>NUCLEOTIDE SEQUENCE [LARGE SCALE GENOMIC DNA]</scope>
    <source>
        <strain>JA-2-3B'a(2-13)</strain>
    </source>
</reference>
<feature type="chain" id="PRO_0000269410" description="Large ribosomal subunit protein bL21">
    <location>
        <begin position="1"/>
        <end position="141"/>
    </location>
</feature>
<feature type="region of interest" description="Disordered" evidence="2">
    <location>
        <begin position="111"/>
        <end position="141"/>
    </location>
</feature>
<feature type="compositionally biased region" description="Low complexity" evidence="2">
    <location>
        <begin position="118"/>
        <end position="133"/>
    </location>
</feature>
<proteinExistence type="inferred from homology"/>
<gene>
    <name evidence="1" type="primary">rplU</name>
    <name evidence="1" type="synonym">rpl21</name>
    <name type="ordered locus">CYB_0742</name>
</gene>
<comment type="function">
    <text evidence="1">This protein binds to 23S rRNA in the presence of protein L20.</text>
</comment>
<comment type="subunit">
    <text evidence="1">Part of the 50S ribosomal subunit. Contacts protein L20.</text>
</comment>
<comment type="similarity">
    <text evidence="1">Belongs to the bacterial ribosomal protein bL21 family.</text>
</comment>
<sequence length="141" mass="15733">MTYAIVETGGKQLWVEPGRFYEVDRLAEVEENSPFDLSRVLLINHEGQITLGHPYVSEAVVRARVLQHRRGDKIIVYKMRPKKKTRKKRGHRQPLTRLLIESIELNGVPLATAPSRTEAAPESNPEAAPSAAATGIPADEE</sequence>
<accession>Q2JNE1</accession>
<evidence type="ECO:0000255" key="1">
    <source>
        <dbReference type="HAMAP-Rule" id="MF_01363"/>
    </source>
</evidence>
<evidence type="ECO:0000256" key="2">
    <source>
        <dbReference type="SAM" id="MobiDB-lite"/>
    </source>
</evidence>
<evidence type="ECO:0000305" key="3"/>
<protein>
    <recommendedName>
        <fullName evidence="1">Large ribosomal subunit protein bL21</fullName>
    </recommendedName>
    <alternativeName>
        <fullName evidence="3">50S ribosomal protein L21</fullName>
    </alternativeName>
</protein>
<organism>
    <name type="scientific">Synechococcus sp. (strain JA-2-3B'a(2-13))</name>
    <name type="common">Cyanobacteria bacterium Yellowstone B-Prime</name>
    <dbReference type="NCBI Taxonomy" id="321332"/>
    <lineage>
        <taxon>Bacteria</taxon>
        <taxon>Bacillati</taxon>
        <taxon>Cyanobacteriota</taxon>
        <taxon>Cyanophyceae</taxon>
        <taxon>Synechococcales</taxon>
        <taxon>Synechococcaceae</taxon>
        <taxon>Synechococcus</taxon>
    </lineage>
</organism>
<name>RL21_SYNJB</name>
<dbReference type="EMBL" id="CP000240">
    <property type="protein sequence ID" value="ABD01725.1"/>
    <property type="molecule type" value="Genomic_DNA"/>
</dbReference>
<dbReference type="RefSeq" id="WP_011432383.1">
    <property type="nucleotide sequence ID" value="NC_007776.1"/>
</dbReference>
<dbReference type="SMR" id="Q2JNE1"/>
<dbReference type="STRING" id="321332.CYB_0742"/>
<dbReference type="KEGG" id="cyb:CYB_0742"/>
<dbReference type="eggNOG" id="COG0261">
    <property type="taxonomic scope" value="Bacteria"/>
</dbReference>
<dbReference type="HOGENOM" id="CLU_061463_1_2_3"/>
<dbReference type="OrthoDB" id="9813334at2"/>
<dbReference type="Proteomes" id="UP000001938">
    <property type="component" value="Chromosome"/>
</dbReference>
<dbReference type="GO" id="GO:0005737">
    <property type="term" value="C:cytoplasm"/>
    <property type="evidence" value="ECO:0007669"/>
    <property type="project" value="UniProtKB-ARBA"/>
</dbReference>
<dbReference type="GO" id="GO:1990904">
    <property type="term" value="C:ribonucleoprotein complex"/>
    <property type="evidence" value="ECO:0007669"/>
    <property type="project" value="UniProtKB-KW"/>
</dbReference>
<dbReference type="GO" id="GO:0005840">
    <property type="term" value="C:ribosome"/>
    <property type="evidence" value="ECO:0007669"/>
    <property type="project" value="UniProtKB-KW"/>
</dbReference>
<dbReference type="GO" id="GO:0019843">
    <property type="term" value="F:rRNA binding"/>
    <property type="evidence" value="ECO:0007669"/>
    <property type="project" value="UniProtKB-UniRule"/>
</dbReference>
<dbReference type="GO" id="GO:0003735">
    <property type="term" value="F:structural constituent of ribosome"/>
    <property type="evidence" value="ECO:0007669"/>
    <property type="project" value="InterPro"/>
</dbReference>
<dbReference type="GO" id="GO:0006412">
    <property type="term" value="P:translation"/>
    <property type="evidence" value="ECO:0007669"/>
    <property type="project" value="UniProtKB-UniRule"/>
</dbReference>
<dbReference type="HAMAP" id="MF_01363">
    <property type="entry name" value="Ribosomal_bL21"/>
    <property type="match status" value="1"/>
</dbReference>
<dbReference type="InterPro" id="IPR028909">
    <property type="entry name" value="bL21-like"/>
</dbReference>
<dbReference type="InterPro" id="IPR036164">
    <property type="entry name" value="bL21-like_sf"/>
</dbReference>
<dbReference type="InterPro" id="IPR001787">
    <property type="entry name" value="Ribosomal_bL21"/>
</dbReference>
<dbReference type="InterPro" id="IPR018258">
    <property type="entry name" value="Ribosomal_bL21_CS"/>
</dbReference>
<dbReference type="NCBIfam" id="TIGR00061">
    <property type="entry name" value="L21"/>
    <property type="match status" value="1"/>
</dbReference>
<dbReference type="PANTHER" id="PTHR21349">
    <property type="entry name" value="50S RIBOSOMAL PROTEIN L21"/>
    <property type="match status" value="1"/>
</dbReference>
<dbReference type="PANTHER" id="PTHR21349:SF0">
    <property type="entry name" value="LARGE RIBOSOMAL SUBUNIT PROTEIN BL21M"/>
    <property type="match status" value="1"/>
</dbReference>
<dbReference type="Pfam" id="PF00829">
    <property type="entry name" value="Ribosomal_L21p"/>
    <property type="match status" value="1"/>
</dbReference>
<dbReference type="SUPFAM" id="SSF141091">
    <property type="entry name" value="L21p-like"/>
    <property type="match status" value="1"/>
</dbReference>
<dbReference type="PROSITE" id="PS01169">
    <property type="entry name" value="RIBOSOMAL_L21"/>
    <property type="match status" value="1"/>
</dbReference>